<gene>
    <name evidence="1" type="primary">zipA</name>
    <name type="ordered locus">SARI_00460</name>
</gene>
<accession>A9MIF9</accession>
<sequence length="326" mass="36128">MMQDLRLILIIVGAIAIIALLVHGFWTSRKERSSMFRDRPLKRMKSKRDDDSYDDDVDADEGVGEVRVHRVNHAPGQPQEHDAPRQSPQHQYQPPYASAQPRPATPPQPQAPQQQPVQQPPQPVPPPQQVQPSAPPVQPQQPAQPSQAPQPVAQPAPPLAEQTFQPADPAVEAEPVVEEAPVVEKPQRKEVVIIMNVAAHHGSELNGEVLLNSIQQSGFKFGDMNIFHRHLSPDGSGPALFSLANMVNPGTFDPEMTDFTTPGVTIFMQVPSYGDALQNFKLMLQSAQHIADEVGGVVLDDQRRMMTPQKLREYQDRIREVMDANA</sequence>
<keyword id="KW-0131">Cell cycle</keyword>
<keyword id="KW-0132">Cell division</keyword>
<keyword id="KW-0997">Cell inner membrane</keyword>
<keyword id="KW-1003">Cell membrane</keyword>
<keyword id="KW-0472">Membrane</keyword>
<keyword id="KW-1185">Reference proteome</keyword>
<keyword id="KW-0812">Transmembrane</keyword>
<keyword id="KW-1133">Transmembrane helix</keyword>
<dbReference type="EMBL" id="CP000880">
    <property type="protein sequence ID" value="ABX20396.1"/>
    <property type="molecule type" value="Genomic_DNA"/>
</dbReference>
<dbReference type="SMR" id="A9MIF9"/>
<dbReference type="STRING" id="41514.SARI_00460"/>
<dbReference type="KEGG" id="ses:SARI_00460"/>
<dbReference type="HOGENOM" id="CLU_030174_1_0_6"/>
<dbReference type="Proteomes" id="UP000002084">
    <property type="component" value="Chromosome"/>
</dbReference>
<dbReference type="GO" id="GO:0032153">
    <property type="term" value="C:cell division site"/>
    <property type="evidence" value="ECO:0007669"/>
    <property type="project" value="UniProtKB-UniRule"/>
</dbReference>
<dbReference type="GO" id="GO:0005886">
    <property type="term" value="C:plasma membrane"/>
    <property type="evidence" value="ECO:0007669"/>
    <property type="project" value="UniProtKB-SubCell"/>
</dbReference>
<dbReference type="GO" id="GO:0000917">
    <property type="term" value="P:division septum assembly"/>
    <property type="evidence" value="ECO:0007669"/>
    <property type="project" value="TreeGrafter"/>
</dbReference>
<dbReference type="GO" id="GO:0043093">
    <property type="term" value="P:FtsZ-dependent cytokinesis"/>
    <property type="evidence" value="ECO:0007669"/>
    <property type="project" value="UniProtKB-UniRule"/>
</dbReference>
<dbReference type="CDD" id="cd00231">
    <property type="entry name" value="ZipA"/>
    <property type="match status" value="1"/>
</dbReference>
<dbReference type="FunFam" id="3.30.1400.10:FF:000001">
    <property type="entry name" value="Cell division protein ZipA"/>
    <property type="match status" value="1"/>
</dbReference>
<dbReference type="Gene3D" id="3.30.1400.10">
    <property type="entry name" value="ZipA, C-terminal FtsZ-binding domain"/>
    <property type="match status" value="1"/>
</dbReference>
<dbReference type="HAMAP" id="MF_00509">
    <property type="entry name" value="ZipA"/>
    <property type="match status" value="1"/>
</dbReference>
<dbReference type="InterPro" id="IPR011919">
    <property type="entry name" value="Cell_div_ZipA"/>
</dbReference>
<dbReference type="InterPro" id="IPR007449">
    <property type="entry name" value="ZipA_FtsZ-bd_C"/>
</dbReference>
<dbReference type="InterPro" id="IPR036765">
    <property type="entry name" value="ZipA_FtsZ-bd_C_sf"/>
</dbReference>
<dbReference type="NCBIfam" id="TIGR02205">
    <property type="entry name" value="septum_zipA"/>
    <property type="match status" value="1"/>
</dbReference>
<dbReference type="PANTHER" id="PTHR38685">
    <property type="entry name" value="CELL DIVISION PROTEIN ZIPA"/>
    <property type="match status" value="1"/>
</dbReference>
<dbReference type="PANTHER" id="PTHR38685:SF1">
    <property type="entry name" value="CELL DIVISION PROTEIN ZIPA"/>
    <property type="match status" value="1"/>
</dbReference>
<dbReference type="Pfam" id="PF04354">
    <property type="entry name" value="ZipA_C"/>
    <property type="match status" value="1"/>
</dbReference>
<dbReference type="SMART" id="SM00771">
    <property type="entry name" value="ZipA_C"/>
    <property type="match status" value="1"/>
</dbReference>
<dbReference type="SUPFAM" id="SSF64383">
    <property type="entry name" value="Cell-division protein ZipA, C-terminal domain"/>
    <property type="match status" value="1"/>
</dbReference>
<reference key="1">
    <citation type="submission" date="2007-11" db="EMBL/GenBank/DDBJ databases">
        <authorList>
            <consortium name="The Salmonella enterica serovar Arizonae Genome Sequencing Project"/>
            <person name="McClelland M."/>
            <person name="Sanderson E.K."/>
            <person name="Porwollik S."/>
            <person name="Spieth J."/>
            <person name="Clifton W.S."/>
            <person name="Fulton R."/>
            <person name="Chunyan W."/>
            <person name="Wollam A."/>
            <person name="Shah N."/>
            <person name="Pepin K."/>
            <person name="Bhonagiri V."/>
            <person name="Nash W."/>
            <person name="Johnson M."/>
            <person name="Thiruvilangam P."/>
            <person name="Wilson R."/>
        </authorList>
    </citation>
    <scope>NUCLEOTIDE SEQUENCE [LARGE SCALE GENOMIC DNA]</scope>
    <source>
        <strain>ATCC BAA-731 / CDC346-86 / RSK2980</strain>
    </source>
</reference>
<name>ZIPA_SALAR</name>
<evidence type="ECO:0000255" key="1">
    <source>
        <dbReference type="HAMAP-Rule" id="MF_00509"/>
    </source>
</evidence>
<evidence type="ECO:0000256" key="2">
    <source>
        <dbReference type="SAM" id="MobiDB-lite"/>
    </source>
</evidence>
<protein>
    <recommendedName>
        <fullName evidence="1">Cell division protein ZipA</fullName>
    </recommendedName>
</protein>
<proteinExistence type="inferred from homology"/>
<organism>
    <name type="scientific">Salmonella arizonae (strain ATCC BAA-731 / CDC346-86 / RSK2980)</name>
    <dbReference type="NCBI Taxonomy" id="41514"/>
    <lineage>
        <taxon>Bacteria</taxon>
        <taxon>Pseudomonadati</taxon>
        <taxon>Pseudomonadota</taxon>
        <taxon>Gammaproteobacteria</taxon>
        <taxon>Enterobacterales</taxon>
        <taxon>Enterobacteriaceae</taxon>
        <taxon>Salmonella</taxon>
    </lineage>
</organism>
<feature type="chain" id="PRO_1000081579" description="Cell division protein ZipA">
    <location>
        <begin position="1"/>
        <end position="326"/>
    </location>
</feature>
<feature type="topological domain" description="Periplasmic" evidence="1">
    <location>
        <begin position="1"/>
        <end position="6"/>
    </location>
</feature>
<feature type="transmembrane region" description="Helical" evidence="1">
    <location>
        <begin position="7"/>
        <end position="27"/>
    </location>
</feature>
<feature type="topological domain" description="Cytoplasmic" evidence="1">
    <location>
        <begin position="28"/>
        <end position="326"/>
    </location>
</feature>
<feature type="region of interest" description="Disordered" evidence="2">
    <location>
        <begin position="42"/>
        <end position="162"/>
    </location>
</feature>
<feature type="compositionally biased region" description="Acidic residues" evidence="2">
    <location>
        <begin position="51"/>
        <end position="63"/>
    </location>
</feature>
<feature type="compositionally biased region" description="Pro residues" evidence="2">
    <location>
        <begin position="118"/>
        <end position="139"/>
    </location>
</feature>
<feature type="compositionally biased region" description="Low complexity" evidence="2">
    <location>
        <begin position="140"/>
        <end position="151"/>
    </location>
</feature>
<comment type="function">
    <text evidence="1">Essential cell division protein that stabilizes the FtsZ protofilaments by cross-linking them and that serves as a cytoplasmic membrane anchor for the Z ring. Also required for the recruitment to the septal ring of downstream cell division proteins.</text>
</comment>
<comment type="subunit">
    <text evidence="1">Interacts with FtsZ via their C-terminal domains.</text>
</comment>
<comment type="subcellular location">
    <subcellularLocation>
        <location evidence="1">Cell inner membrane</location>
        <topology evidence="1">Single-pass type I membrane protein</topology>
    </subcellularLocation>
    <text evidence="1">Localizes to the Z ring in an FtsZ-dependent manner.</text>
</comment>
<comment type="similarity">
    <text evidence="1">Belongs to the ZipA family.</text>
</comment>